<sequence>METNFSIPLNETEEVLPEPAGHTVLWIFSLLVHGVTFVFGVLGNGLVIWVAGFRMTRTVNTICYLNLALADFSFSAILPFRMVSVAMREKWPFGSFLCKLVHVMIDINLFVSVYLITIIALDRCICVLHPAWAQNHRTMSLAKRVMTGLWILTIVLTLPNFIFWTTIRTTNGDTYCIFNFAFWGDTAVERLNVFITMAKVFLILHFIIGFSMPMSIITVCYGIIAAKIHRNHMIKSSRPLRVFAAVVASFFICWFPYELIGILMAVWLKEMLLNGKYKIILVLINPTSSLAFFNSCLNPILYVFMGRNFQERLIRSLPTSLERALTEVPDSAQTSNTHTTSASPPEETE</sequence>
<accession>P79243</accession>
<feature type="chain" id="PRO_0000069459" description="N-formyl peptide receptor 3">
    <location>
        <begin position="1"/>
        <end position="349" status="greater than"/>
    </location>
</feature>
<feature type="topological domain" description="Extracellular" evidence="1">
    <location>
        <begin position="1"/>
        <end position="27"/>
    </location>
</feature>
<feature type="transmembrane region" description="Helical; Name=1" evidence="1">
    <location>
        <begin position="28"/>
        <end position="50"/>
    </location>
</feature>
<feature type="topological domain" description="Cytoplasmic" evidence="1">
    <location>
        <begin position="51"/>
        <end position="61"/>
    </location>
</feature>
<feature type="transmembrane region" description="Helical; Name=2" evidence="1">
    <location>
        <begin position="62"/>
        <end position="83"/>
    </location>
</feature>
<feature type="topological domain" description="Extracellular" evidence="1">
    <location>
        <begin position="84"/>
        <end position="100"/>
    </location>
</feature>
<feature type="transmembrane region" description="Helical; Name=3" evidence="1">
    <location>
        <begin position="101"/>
        <end position="121"/>
    </location>
</feature>
<feature type="topological domain" description="Cytoplasmic" evidence="1">
    <location>
        <begin position="122"/>
        <end position="140"/>
    </location>
</feature>
<feature type="transmembrane region" description="Helical; Name=4" evidence="1">
    <location>
        <begin position="141"/>
        <end position="162"/>
    </location>
</feature>
<feature type="topological domain" description="Extracellular" evidence="1">
    <location>
        <begin position="163"/>
        <end position="205"/>
    </location>
</feature>
<feature type="transmembrane region" description="Helical; Name=5" evidence="1">
    <location>
        <begin position="206"/>
        <end position="226"/>
    </location>
</feature>
<feature type="topological domain" description="Cytoplasmic" evidence="1">
    <location>
        <begin position="227"/>
        <end position="242"/>
    </location>
</feature>
<feature type="transmembrane region" description="Helical; Name=6" evidence="1">
    <location>
        <begin position="243"/>
        <end position="266"/>
    </location>
</feature>
<feature type="topological domain" description="Extracellular" evidence="1">
    <location>
        <begin position="267"/>
        <end position="286"/>
    </location>
</feature>
<feature type="transmembrane region" description="Helical; Name=7" evidence="1">
    <location>
        <begin position="287"/>
        <end position="306"/>
    </location>
</feature>
<feature type="topological domain" description="Cytoplasmic" evidence="1">
    <location>
        <begin position="307"/>
        <end position="349" status="greater than"/>
    </location>
</feature>
<feature type="region of interest" description="Disordered" evidence="3">
    <location>
        <begin position="327"/>
        <end position="349"/>
    </location>
</feature>
<feature type="compositionally biased region" description="Polar residues" evidence="3">
    <location>
        <begin position="331"/>
        <end position="343"/>
    </location>
</feature>
<feature type="glycosylation site" description="N-linked (GlcNAc...) asparagine" evidence="1">
    <location>
        <position position="4"/>
    </location>
</feature>
<feature type="glycosylation site" description="N-linked (GlcNAc...) asparagine" evidence="1">
    <location>
        <position position="10"/>
    </location>
</feature>
<feature type="disulfide bond" evidence="2">
    <location>
        <begin position="98"/>
        <end position="176"/>
    </location>
</feature>
<feature type="non-terminal residue">
    <location>
        <position position="349"/>
    </location>
</feature>
<keyword id="KW-1003">Cell membrane</keyword>
<keyword id="KW-0145">Chemotaxis</keyword>
<keyword id="KW-1015">Disulfide bond</keyword>
<keyword id="KW-0297">G-protein coupled receptor</keyword>
<keyword id="KW-0325">Glycoprotein</keyword>
<keyword id="KW-0472">Membrane</keyword>
<keyword id="KW-0675">Receptor</keyword>
<keyword id="KW-1185">Reference proteome</keyword>
<keyword id="KW-0807">Transducer</keyword>
<keyword id="KW-0812">Transmembrane</keyword>
<keyword id="KW-1133">Transmembrane helix</keyword>
<gene>
    <name type="primary">FPR3</name>
    <name type="synonym">FPRL2</name>
</gene>
<dbReference type="EMBL" id="X97743">
    <property type="protein sequence ID" value="CAA66327.1"/>
    <property type="molecule type" value="Genomic_DNA"/>
</dbReference>
<dbReference type="SMR" id="P79243"/>
<dbReference type="STRING" id="9598.ENSPTRP00000062369"/>
<dbReference type="GlyCosmos" id="P79243">
    <property type="glycosylation" value="2 sites, No reported glycans"/>
</dbReference>
<dbReference type="PaxDb" id="9598-ENSPTRP00000019570"/>
<dbReference type="eggNOG" id="KOG3656">
    <property type="taxonomic scope" value="Eukaryota"/>
</dbReference>
<dbReference type="InParanoid" id="P79243"/>
<dbReference type="Proteomes" id="UP000002277">
    <property type="component" value="Unplaced"/>
</dbReference>
<dbReference type="GO" id="GO:0005886">
    <property type="term" value="C:plasma membrane"/>
    <property type="evidence" value="ECO:0000318"/>
    <property type="project" value="GO_Central"/>
</dbReference>
<dbReference type="GO" id="GO:0004875">
    <property type="term" value="F:complement receptor activity"/>
    <property type="evidence" value="ECO:0000318"/>
    <property type="project" value="GO_Central"/>
</dbReference>
<dbReference type="GO" id="GO:0004982">
    <property type="term" value="F:N-formyl peptide receptor activity"/>
    <property type="evidence" value="ECO:0000318"/>
    <property type="project" value="GO_Central"/>
</dbReference>
<dbReference type="GO" id="GO:0006935">
    <property type="term" value="P:chemotaxis"/>
    <property type="evidence" value="ECO:0007669"/>
    <property type="project" value="UniProtKB-KW"/>
</dbReference>
<dbReference type="GO" id="GO:0002430">
    <property type="term" value="P:complement receptor mediated signaling pathway"/>
    <property type="evidence" value="ECO:0000318"/>
    <property type="project" value="GO_Central"/>
</dbReference>
<dbReference type="GO" id="GO:0006954">
    <property type="term" value="P:inflammatory response"/>
    <property type="evidence" value="ECO:0000318"/>
    <property type="project" value="GO_Central"/>
</dbReference>
<dbReference type="GO" id="GO:0007200">
    <property type="term" value="P:phospholipase C-activating G protein-coupled receptor signaling pathway"/>
    <property type="evidence" value="ECO:0000318"/>
    <property type="project" value="GO_Central"/>
</dbReference>
<dbReference type="GO" id="GO:0007204">
    <property type="term" value="P:positive regulation of cytosolic calcium ion concentration"/>
    <property type="evidence" value="ECO:0000318"/>
    <property type="project" value="GO_Central"/>
</dbReference>
<dbReference type="FunFam" id="1.20.1070.10:FF:000034">
    <property type="entry name" value="G-protein coupled receptor 1"/>
    <property type="match status" value="1"/>
</dbReference>
<dbReference type="Gene3D" id="1.20.1070.10">
    <property type="entry name" value="Rhodopsin 7-helix transmembrane proteins"/>
    <property type="match status" value="1"/>
</dbReference>
<dbReference type="InterPro" id="IPR000826">
    <property type="entry name" value="Formyl_rcpt-rel"/>
</dbReference>
<dbReference type="InterPro" id="IPR000276">
    <property type="entry name" value="GPCR_Rhodpsn"/>
</dbReference>
<dbReference type="InterPro" id="IPR017452">
    <property type="entry name" value="GPCR_Rhodpsn_7TM"/>
</dbReference>
<dbReference type="PANTHER" id="PTHR24225:SF58">
    <property type="match status" value="1"/>
</dbReference>
<dbReference type="PANTHER" id="PTHR24225">
    <property type="entry name" value="CHEMOTACTIC RECEPTOR"/>
    <property type="match status" value="1"/>
</dbReference>
<dbReference type="Pfam" id="PF00001">
    <property type="entry name" value="7tm_1"/>
    <property type="match status" value="1"/>
</dbReference>
<dbReference type="PRINTS" id="PR00526">
    <property type="entry name" value="FMETLEUPHER"/>
</dbReference>
<dbReference type="PRINTS" id="PR00237">
    <property type="entry name" value="GPCRRHODOPSN"/>
</dbReference>
<dbReference type="SUPFAM" id="SSF81321">
    <property type="entry name" value="Family A G protein-coupled receptor-like"/>
    <property type="match status" value="1"/>
</dbReference>
<dbReference type="PROSITE" id="PS00237">
    <property type="entry name" value="G_PROTEIN_RECEP_F1_1"/>
    <property type="match status" value="1"/>
</dbReference>
<dbReference type="PROSITE" id="PS50262">
    <property type="entry name" value="G_PROTEIN_RECEP_F1_2"/>
    <property type="match status" value="1"/>
</dbReference>
<reference key="1">
    <citation type="journal article" date="1996" name="Immunogenetics">
        <title>Molecular evolution of the N-formyl peptide and C5a receptors in non-human primates.</title>
        <authorList>
            <person name="Alvarez V."/>
            <person name="Coto E."/>
            <person name="Sehen F."/>
            <person name="Gouzalek-Koces S."/>
            <person name="Lopez-Larrea C."/>
        </authorList>
    </citation>
    <scope>NUCLEOTIDE SEQUENCE [GENOMIC DNA]</scope>
</reference>
<protein>
    <recommendedName>
        <fullName>N-formyl peptide receptor 3</fullName>
    </recommendedName>
    <alternativeName>
        <fullName>FMLP-related receptor II</fullName>
        <shortName>FMLP-R-II</shortName>
    </alternativeName>
    <alternativeName>
        <fullName>Formyl peptide receptor-like 2</fullName>
    </alternativeName>
</protein>
<proteinExistence type="inferred from homology"/>
<comment type="function">
    <text>Low affinity receptor for N-formyl-methionyl peptides, which are powerful neutrophils chemotactic factors. Binding of FMLP to the receptor causes activation of neutrophils. This response is mediated via a G-protein that activates a phosphatidylinositol-calcium second messenger system.</text>
</comment>
<comment type="subcellular location">
    <subcellularLocation>
        <location>Cell membrane</location>
        <topology>Multi-pass membrane protein</topology>
    </subcellularLocation>
</comment>
<comment type="similarity">
    <text evidence="2">Belongs to the G-protein coupled receptor 1 family.</text>
</comment>
<organism>
    <name type="scientific">Pan troglodytes</name>
    <name type="common">Chimpanzee</name>
    <dbReference type="NCBI Taxonomy" id="9598"/>
    <lineage>
        <taxon>Eukaryota</taxon>
        <taxon>Metazoa</taxon>
        <taxon>Chordata</taxon>
        <taxon>Craniata</taxon>
        <taxon>Vertebrata</taxon>
        <taxon>Euteleostomi</taxon>
        <taxon>Mammalia</taxon>
        <taxon>Eutheria</taxon>
        <taxon>Euarchontoglires</taxon>
        <taxon>Primates</taxon>
        <taxon>Haplorrhini</taxon>
        <taxon>Catarrhini</taxon>
        <taxon>Hominidae</taxon>
        <taxon>Pan</taxon>
    </lineage>
</organism>
<evidence type="ECO:0000255" key="1"/>
<evidence type="ECO:0000255" key="2">
    <source>
        <dbReference type="PROSITE-ProRule" id="PRU00521"/>
    </source>
</evidence>
<evidence type="ECO:0000256" key="3">
    <source>
        <dbReference type="SAM" id="MobiDB-lite"/>
    </source>
</evidence>
<name>FPR3_PANTR</name>